<evidence type="ECO:0000255" key="1">
    <source>
        <dbReference type="HAMAP-Rule" id="MF_01007"/>
    </source>
</evidence>
<protein>
    <recommendedName>
        <fullName evidence="1">Ribosomal RNA small subunit methyltransferase H</fullName>
        <ecNumber evidence="1">2.1.1.199</ecNumber>
    </recommendedName>
    <alternativeName>
        <fullName evidence="1">16S rRNA m(4)C1402 methyltransferase</fullName>
    </alternativeName>
    <alternativeName>
        <fullName evidence="1">rRNA (cytosine-N(4)-)-methyltransferase RsmH</fullName>
    </alternativeName>
</protein>
<gene>
    <name evidence="1" type="primary">rsmH</name>
    <name type="synonym">mraW</name>
    <name type="ordered locus">Atu2102</name>
    <name type="ORF">AGR_C_3815</name>
</gene>
<comment type="function">
    <text evidence="1">Specifically methylates the N4 position of cytidine in position 1402 (C1402) of 16S rRNA.</text>
</comment>
<comment type="catalytic activity">
    <reaction evidence="1">
        <text>cytidine(1402) in 16S rRNA + S-adenosyl-L-methionine = N(4)-methylcytidine(1402) in 16S rRNA + S-adenosyl-L-homocysteine + H(+)</text>
        <dbReference type="Rhea" id="RHEA:42928"/>
        <dbReference type="Rhea" id="RHEA-COMP:10286"/>
        <dbReference type="Rhea" id="RHEA-COMP:10287"/>
        <dbReference type="ChEBI" id="CHEBI:15378"/>
        <dbReference type="ChEBI" id="CHEBI:57856"/>
        <dbReference type="ChEBI" id="CHEBI:59789"/>
        <dbReference type="ChEBI" id="CHEBI:74506"/>
        <dbReference type="ChEBI" id="CHEBI:82748"/>
        <dbReference type="EC" id="2.1.1.199"/>
    </reaction>
</comment>
<comment type="subcellular location">
    <subcellularLocation>
        <location evidence="1">Cytoplasm</location>
    </subcellularLocation>
</comment>
<comment type="similarity">
    <text evidence="1">Belongs to the methyltransferase superfamily. RsmH family.</text>
</comment>
<feature type="chain" id="PRO_0000108564" description="Ribosomal RNA small subunit methyltransferase H">
    <location>
        <begin position="1"/>
        <end position="341"/>
    </location>
</feature>
<feature type="binding site" evidence="1">
    <location>
        <begin position="47"/>
        <end position="49"/>
    </location>
    <ligand>
        <name>S-adenosyl-L-methionine</name>
        <dbReference type="ChEBI" id="CHEBI:59789"/>
    </ligand>
</feature>
<feature type="binding site" evidence="1">
    <location>
        <position position="64"/>
    </location>
    <ligand>
        <name>S-adenosyl-L-methionine</name>
        <dbReference type="ChEBI" id="CHEBI:59789"/>
    </ligand>
</feature>
<feature type="binding site" evidence="1">
    <location>
        <position position="91"/>
    </location>
    <ligand>
        <name>S-adenosyl-L-methionine</name>
        <dbReference type="ChEBI" id="CHEBI:59789"/>
    </ligand>
</feature>
<feature type="binding site" evidence="1">
    <location>
        <position position="109"/>
    </location>
    <ligand>
        <name>S-adenosyl-L-methionine</name>
        <dbReference type="ChEBI" id="CHEBI:59789"/>
    </ligand>
</feature>
<feature type="binding site" evidence="1">
    <location>
        <position position="116"/>
    </location>
    <ligand>
        <name>S-adenosyl-L-methionine</name>
        <dbReference type="ChEBI" id="CHEBI:59789"/>
    </ligand>
</feature>
<keyword id="KW-0963">Cytoplasm</keyword>
<keyword id="KW-0489">Methyltransferase</keyword>
<keyword id="KW-1185">Reference proteome</keyword>
<keyword id="KW-0698">rRNA processing</keyword>
<keyword id="KW-0949">S-adenosyl-L-methionine</keyword>
<keyword id="KW-0808">Transferase</keyword>
<proteinExistence type="inferred from homology"/>
<accession>P58745</accession>
<sequence length="341" mass="36370">MAANSGGRSSDADGGPQRHIPVLLREVIAALEPAPGKIILDGTFGAGGYTQAILDQGANVIALDRDPTAIAGGEAMVVANGGRLSLIQSQFSDLAKHAPEDGLDGVVLDIGVSSMQIDEAERGFSFQKNGPLDMRMSASGVSAADVVNRAKVGDLIRIFGFLGEEKQPGRIARAIEKKRAEEPFRTTRDLAGLIEIVTPRKAKDKIHPATRVFQALRVFVNDELGELAQALFAAERSLKPGGRLVVVTFHSLEDRIVKKFFSDRSGKAAGSRHLPMVEDKPAIFENIGKPMIAASDEEAELNPRARSAKLRAGLRTTAPARAADFSIFELPDLASLEKMGG</sequence>
<organism>
    <name type="scientific">Agrobacterium fabrum (strain C58 / ATCC 33970)</name>
    <name type="common">Agrobacterium tumefaciens (strain C58)</name>
    <dbReference type="NCBI Taxonomy" id="176299"/>
    <lineage>
        <taxon>Bacteria</taxon>
        <taxon>Pseudomonadati</taxon>
        <taxon>Pseudomonadota</taxon>
        <taxon>Alphaproteobacteria</taxon>
        <taxon>Hyphomicrobiales</taxon>
        <taxon>Rhizobiaceae</taxon>
        <taxon>Rhizobium/Agrobacterium group</taxon>
        <taxon>Agrobacterium</taxon>
        <taxon>Agrobacterium tumefaciens complex</taxon>
    </lineage>
</organism>
<dbReference type="EC" id="2.1.1.199" evidence="1"/>
<dbReference type="EMBL" id="AE007869">
    <property type="protein sequence ID" value="AAK87852.2"/>
    <property type="molecule type" value="Genomic_DNA"/>
</dbReference>
<dbReference type="PIR" id="AG2834">
    <property type="entry name" value="AG2834"/>
</dbReference>
<dbReference type="PIR" id="C97612">
    <property type="entry name" value="C97612"/>
</dbReference>
<dbReference type="RefSeq" id="NP_355067.2">
    <property type="nucleotide sequence ID" value="NC_003062.2"/>
</dbReference>
<dbReference type="RefSeq" id="WP_010972059.1">
    <property type="nucleotide sequence ID" value="NC_003062.2"/>
</dbReference>
<dbReference type="SMR" id="P58745"/>
<dbReference type="STRING" id="176299.Atu2102"/>
<dbReference type="EnsemblBacteria" id="AAK87852">
    <property type="protein sequence ID" value="AAK87852"/>
    <property type="gene ID" value="Atu2102"/>
</dbReference>
<dbReference type="GeneID" id="1134140"/>
<dbReference type="KEGG" id="atu:Atu2102"/>
<dbReference type="PATRIC" id="fig|176299.10.peg.2116"/>
<dbReference type="eggNOG" id="COG0275">
    <property type="taxonomic scope" value="Bacteria"/>
</dbReference>
<dbReference type="HOGENOM" id="CLU_038422_1_1_5"/>
<dbReference type="OrthoDB" id="9806637at2"/>
<dbReference type="PhylomeDB" id="P58745"/>
<dbReference type="BioCyc" id="AGRO:ATU2102-MONOMER"/>
<dbReference type="Proteomes" id="UP000000813">
    <property type="component" value="Chromosome circular"/>
</dbReference>
<dbReference type="GO" id="GO:0005737">
    <property type="term" value="C:cytoplasm"/>
    <property type="evidence" value="ECO:0007669"/>
    <property type="project" value="UniProtKB-SubCell"/>
</dbReference>
<dbReference type="GO" id="GO:0071424">
    <property type="term" value="F:rRNA (cytosine-N4-)-methyltransferase activity"/>
    <property type="evidence" value="ECO:0007669"/>
    <property type="project" value="UniProtKB-UniRule"/>
</dbReference>
<dbReference type="GO" id="GO:0070475">
    <property type="term" value="P:rRNA base methylation"/>
    <property type="evidence" value="ECO:0007669"/>
    <property type="project" value="UniProtKB-UniRule"/>
</dbReference>
<dbReference type="Gene3D" id="1.10.150.170">
    <property type="entry name" value="Putative methyltransferase TM0872, insert domain"/>
    <property type="match status" value="1"/>
</dbReference>
<dbReference type="Gene3D" id="3.40.50.150">
    <property type="entry name" value="Vaccinia Virus protein VP39"/>
    <property type="match status" value="1"/>
</dbReference>
<dbReference type="HAMAP" id="MF_01007">
    <property type="entry name" value="16SrRNA_methyltr_H"/>
    <property type="match status" value="1"/>
</dbReference>
<dbReference type="InterPro" id="IPR002903">
    <property type="entry name" value="RsmH"/>
</dbReference>
<dbReference type="InterPro" id="IPR023397">
    <property type="entry name" value="SAM-dep_MeTrfase_MraW_recog"/>
</dbReference>
<dbReference type="InterPro" id="IPR029063">
    <property type="entry name" value="SAM-dependent_MTases_sf"/>
</dbReference>
<dbReference type="NCBIfam" id="TIGR00006">
    <property type="entry name" value="16S rRNA (cytosine(1402)-N(4))-methyltransferase RsmH"/>
    <property type="match status" value="1"/>
</dbReference>
<dbReference type="PANTHER" id="PTHR11265:SF0">
    <property type="entry name" value="12S RRNA N4-METHYLCYTIDINE METHYLTRANSFERASE"/>
    <property type="match status" value="1"/>
</dbReference>
<dbReference type="PANTHER" id="PTHR11265">
    <property type="entry name" value="S-ADENOSYL-METHYLTRANSFERASE MRAW"/>
    <property type="match status" value="1"/>
</dbReference>
<dbReference type="Pfam" id="PF01795">
    <property type="entry name" value="Methyltransf_5"/>
    <property type="match status" value="1"/>
</dbReference>
<dbReference type="PIRSF" id="PIRSF004486">
    <property type="entry name" value="MraW"/>
    <property type="match status" value="1"/>
</dbReference>
<dbReference type="SUPFAM" id="SSF81799">
    <property type="entry name" value="Putative methyltransferase TM0872, insert domain"/>
    <property type="match status" value="1"/>
</dbReference>
<dbReference type="SUPFAM" id="SSF53335">
    <property type="entry name" value="S-adenosyl-L-methionine-dependent methyltransferases"/>
    <property type="match status" value="1"/>
</dbReference>
<name>RSMH_AGRFC</name>
<reference key="1">
    <citation type="journal article" date="2001" name="Science">
        <title>The genome of the natural genetic engineer Agrobacterium tumefaciens C58.</title>
        <authorList>
            <person name="Wood D.W."/>
            <person name="Setubal J.C."/>
            <person name="Kaul R."/>
            <person name="Monks D.E."/>
            <person name="Kitajima J.P."/>
            <person name="Okura V.K."/>
            <person name="Zhou Y."/>
            <person name="Chen L."/>
            <person name="Wood G.E."/>
            <person name="Almeida N.F. Jr."/>
            <person name="Woo L."/>
            <person name="Chen Y."/>
            <person name="Paulsen I.T."/>
            <person name="Eisen J.A."/>
            <person name="Karp P.D."/>
            <person name="Bovee D. Sr."/>
            <person name="Chapman P."/>
            <person name="Clendenning J."/>
            <person name="Deatherage G."/>
            <person name="Gillet W."/>
            <person name="Grant C."/>
            <person name="Kutyavin T."/>
            <person name="Levy R."/>
            <person name="Li M.-J."/>
            <person name="McClelland E."/>
            <person name="Palmieri A."/>
            <person name="Raymond C."/>
            <person name="Rouse G."/>
            <person name="Saenphimmachak C."/>
            <person name="Wu Z."/>
            <person name="Romero P."/>
            <person name="Gordon D."/>
            <person name="Zhang S."/>
            <person name="Yoo H."/>
            <person name="Tao Y."/>
            <person name="Biddle P."/>
            <person name="Jung M."/>
            <person name="Krespan W."/>
            <person name="Perry M."/>
            <person name="Gordon-Kamm B."/>
            <person name="Liao L."/>
            <person name="Kim S."/>
            <person name="Hendrick C."/>
            <person name="Zhao Z.-Y."/>
            <person name="Dolan M."/>
            <person name="Chumley F."/>
            <person name="Tingey S.V."/>
            <person name="Tomb J.-F."/>
            <person name="Gordon M.P."/>
            <person name="Olson M.V."/>
            <person name="Nester E.W."/>
        </authorList>
    </citation>
    <scope>NUCLEOTIDE SEQUENCE [LARGE SCALE GENOMIC DNA]</scope>
    <source>
        <strain>C58 / ATCC 33970</strain>
    </source>
</reference>
<reference key="2">
    <citation type="journal article" date="2001" name="Science">
        <title>Genome sequence of the plant pathogen and biotechnology agent Agrobacterium tumefaciens C58.</title>
        <authorList>
            <person name="Goodner B."/>
            <person name="Hinkle G."/>
            <person name="Gattung S."/>
            <person name="Miller N."/>
            <person name="Blanchard M."/>
            <person name="Qurollo B."/>
            <person name="Goldman B.S."/>
            <person name="Cao Y."/>
            <person name="Askenazi M."/>
            <person name="Halling C."/>
            <person name="Mullin L."/>
            <person name="Houmiel K."/>
            <person name="Gordon J."/>
            <person name="Vaudin M."/>
            <person name="Iartchouk O."/>
            <person name="Epp A."/>
            <person name="Liu F."/>
            <person name="Wollam C."/>
            <person name="Allinger M."/>
            <person name="Doughty D."/>
            <person name="Scott C."/>
            <person name="Lappas C."/>
            <person name="Markelz B."/>
            <person name="Flanagan C."/>
            <person name="Crowell C."/>
            <person name="Gurson J."/>
            <person name="Lomo C."/>
            <person name="Sear C."/>
            <person name="Strub G."/>
            <person name="Cielo C."/>
            <person name="Slater S."/>
        </authorList>
    </citation>
    <scope>NUCLEOTIDE SEQUENCE [LARGE SCALE GENOMIC DNA]</scope>
    <source>
        <strain>C58 / ATCC 33970</strain>
    </source>
</reference>